<feature type="chain" id="PRO_1000013892" description="Ubiquinone biosynthesis O-methyltransferase">
    <location>
        <begin position="1"/>
        <end position="248"/>
    </location>
</feature>
<feature type="binding site" evidence="1">
    <location>
        <position position="41"/>
    </location>
    <ligand>
        <name>S-adenosyl-L-methionine</name>
        <dbReference type="ChEBI" id="CHEBI:59789"/>
    </ligand>
</feature>
<feature type="binding site" evidence="1">
    <location>
        <position position="72"/>
    </location>
    <ligand>
        <name>S-adenosyl-L-methionine</name>
        <dbReference type="ChEBI" id="CHEBI:59789"/>
    </ligand>
</feature>
<feature type="binding site" evidence="1">
    <location>
        <position position="93"/>
    </location>
    <ligand>
        <name>S-adenosyl-L-methionine</name>
        <dbReference type="ChEBI" id="CHEBI:59789"/>
    </ligand>
</feature>
<feature type="binding site" evidence="1">
    <location>
        <position position="136"/>
    </location>
    <ligand>
        <name>S-adenosyl-L-methionine</name>
        <dbReference type="ChEBI" id="CHEBI:59789"/>
    </ligand>
</feature>
<accession>A5VSK3</accession>
<dbReference type="EC" id="2.1.1.222" evidence="1"/>
<dbReference type="EC" id="2.1.1.64" evidence="1"/>
<dbReference type="EMBL" id="CP000708">
    <property type="protein sequence ID" value="ABQ61540.1"/>
    <property type="molecule type" value="Genomic_DNA"/>
</dbReference>
<dbReference type="RefSeq" id="WP_002964945.1">
    <property type="nucleotide sequence ID" value="NC_009505.1"/>
</dbReference>
<dbReference type="SMR" id="A5VSK3"/>
<dbReference type="GeneID" id="97534838"/>
<dbReference type="KEGG" id="bov:BOV_1803"/>
<dbReference type="HOGENOM" id="CLU_042432_0_0_5"/>
<dbReference type="PhylomeDB" id="A5VSK3"/>
<dbReference type="UniPathway" id="UPA00232"/>
<dbReference type="Proteomes" id="UP000006383">
    <property type="component" value="Chromosome I"/>
</dbReference>
<dbReference type="GO" id="GO:0102208">
    <property type="term" value="F:2-polyprenyl-6-hydroxyphenol methylase activity"/>
    <property type="evidence" value="ECO:0007669"/>
    <property type="project" value="UniProtKB-EC"/>
</dbReference>
<dbReference type="GO" id="GO:0061542">
    <property type="term" value="F:3-demethylubiquinol 3-O-methyltransferase activity"/>
    <property type="evidence" value="ECO:0007669"/>
    <property type="project" value="UniProtKB-UniRule"/>
</dbReference>
<dbReference type="GO" id="GO:0010420">
    <property type="term" value="F:polyprenyldihydroxybenzoate methyltransferase activity"/>
    <property type="evidence" value="ECO:0007669"/>
    <property type="project" value="InterPro"/>
</dbReference>
<dbReference type="GO" id="GO:0032259">
    <property type="term" value="P:methylation"/>
    <property type="evidence" value="ECO:0007669"/>
    <property type="project" value="UniProtKB-KW"/>
</dbReference>
<dbReference type="CDD" id="cd02440">
    <property type="entry name" value="AdoMet_MTases"/>
    <property type="match status" value="1"/>
</dbReference>
<dbReference type="Gene3D" id="3.40.50.150">
    <property type="entry name" value="Vaccinia Virus protein VP39"/>
    <property type="match status" value="1"/>
</dbReference>
<dbReference type="HAMAP" id="MF_00472">
    <property type="entry name" value="UbiG"/>
    <property type="match status" value="1"/>
</dbReference>
<dbReference type="InterPro" id="IPR029063">
    <property type="entry name" value="SAM-dependent_MTases_sf"/>
</dbReference>
<dbReference type="InterPro" id="IPR010233">
    <property type="entry name" value="UbiG_MeTrfase"/>
</dbReference>
<dbReference type="NCBIfam" id="TIGR01983">
    <property type="entry name" value="UbiG"/>
    <property type="match status" value="1"/>
</dbReference>
<dbReference type="PANTHER" id="PTHR43464">
    <property type="entry name" value="METHYLTRANSFERASE"/>
    <property type="match status" value="1"/>
</dbReference>
<dbReference type="PANTHER" id="PTHR43464:SF19">
    <property type="entry name" value="UBIQUINONE BIOSYNTHESIS O-METHYLTRANSFERASE, MITOCHONDRIAL"/>
    <property type="match status" value="1"/>
</dbReference>
<dbReference type="Pfam" id="PF13489">
    <property type="entry name" value="Methyltransf_23"/>
    <property type="match status" value="1"/>
</dbReference>
<dbReference type="SUPFAM" id="SSF53335">
    <property type="entry name" value="S-adenosyl-L-methionine-dependent methyltransferases"/>
    <property type="match status" value="1"/>
</dbReference>
<sequence>MTETARTTIDASEIEHFSRIAAQWWDPQGKFRPLHKFNPTRLAYIKEKVCAKFNRDPNAPRPLEGLRFLDIGCGGGLLCEPMARLGATVIGADASATNIEVAKIHAAQSSLDIDYRATTAEALADAGEKFDVVLNMEVVEHVSDVDLFMSATSAMVKPGGLMFVATINRTLKAYGLAIIGAEYVLRWLPRGTHQYEKLVRPEELEAAFSKADLRLIDKLGVTYNPLADSWNRSRDMDVNYMVLAERPA</sequence>
<proteinExistence type="inferred from homology"/>
<evidence type="ECO:0000255" key="1">
    <source>
        <dbReference type="HAMAP-Rule" id="MF_00472"/>
    </source>
</evidence>
<protein>
    <recommendedName>
        <fullName evidence="1">Ubiquinone biosynthesis O-methyltransferase</fullName>
    </recommendedName>
    <alternativeName>
        <fullName evidence="1">2-polyprenyl-6-hydroxyphenol methylase</fullName>
        <ecNumber evidence="1">2.1.1.222</ecNumber>
    </alternativeName>
    <alternativeName>
        <fullName evidence="1">3-demethylubiquinone 3-O-methyltransferase</fullName>
        <ecNumber evidence="1">2.1.1.64</ecNumber>
    </alternativeName>
</protein>
<keyword id="KW-0489">Methyltransferase</keyword>
<keyword id="KW-0949">S-adenosyl-L-methionine</keyword>
<keyword id="KW-0808">Transferase</keyword>
<keyword id="KW-0831">Ubiquinone biosynthesis</keyword>
<organism>
    <name type="scientific">Brucella ovis (strain ATCC 25840 / 63/290 / NCTC 10512)</name>
    <dbReference type="NCBI Taxonomy" id="444178"/>
    <lineage>
        <taxon>Bacteria</taxon>
        <taxon>Pseudomonadati</taxon>
        <taxon>Pseudomonadota</taxon>
        <taxon>Alphaproteobacteria</taxon>
        <taxon>Hyphomicrobiales</taxon>
        <taxon>Brucellaceae</taxon>
        <taxon>Brucella/Ochrobactrum group</taxon>
        <taxon>Brucella</taxon>
    </lineage>
</organism>
<gene>
    <name evidence="1" type="primary">ubiG</name>
    <name type="ordered locus">BOV_1803</name>
</gene>
<comment type="function">
    <text evidence="1">O-methyltransferase that catalyzes the 2 O-methylation steps in the ubiquinone biosynthetic pathway.</text>
</comment>
<comment type="catalytic activity">
    <reaction evidence="1">
        <text>a 3-demethylubiquinol + S-adenosyl-L-methionine = a ubiquinol + S-adenosyl-L-homocysteine + H(+)</text>
        <dbReference type="Rhea" id="RHEA:44380"/>
        <dbReference type="Rhea" id="RHEA-COMP:9566"/>
        <dbReference type="Rhea" id="RHEA-COMP:10914"/>
        <dbReference type="ChEBI" id="CHEBI:15378"/>
        <dbReference type="ChEBI" id="CHEBI:17976"/>
        <dbReference type="ChEBI" id="CHEBI:57856"/>
        <dbReference type="ChEBI" id="CHEBI:59789"/>
        <dbReference type="ChEBI" id="CHEBI:84422"/>
        <dbReference type="EC" id="2.1.1.64"/>
    </reaction>
</comment>
<comment type="catalytic activity">
    <reaction evidence="1">
        <text>a 3-(all-trans-polyprenyl)benzene-1,2-diol + S-adenosyl-L-methionine = a 2-methoxy-6-(all-trans-polyprenyl)phenol + S-adenosyl-L-homocysteine + H(+)</text>
        <dbReference type="Rhea" id="RHEA:31411"/>
        <dbReference type="Rhea" id="RHEA-COMP:9550"/>
        <dbReference type="Rhea" id="RHEA-COMP:9551"/>
        <dbReference type="ChEBI" id="CHEBI:15378"/>
        <dbReference type="ChEBI" id="CHEBI:57856"/>
        <dbReference type="ChEBI" id="CHEBI:59789"/>
        <dbReference type="ChEBI" id="CHEBI:62729"/>
        <dbReference type="ChEBI" id="CHEBI:62731"/>
        <dbReference type="EC" id="2.1.1.222"/>
    </reaction>
</comment>
<comment type="pathway">
    <text evidence="1">Cofactor biosynthesis; ubiquinone biosynthesis.</text>
</comment>
<comment type="similarity">
    <text evidence="1">Belongs to the methyltransferase superfamily. UbiG/COQ3 family.</text>
</comment>
<reference key="1">
    <citation type="journal article" date="2009" name="PLoS ONE">
        <title>Genome degradation in Brucella ovis corresponds with narrowing of its host range and tissue tropism.</title>
        <authorList>
            <person name="Tsolis R.M."/>
            <person name="Seshadri R."/>
            <person name="Santos R.L."/>
            <person name="Sangari F.J."/>
            <person name="Lobo J.M."/>
            <person name="de Jong M.F."/>
            <person name="Ren Q."/>
            <person name="Myers G."/>
            <person name="Brinkac L.M."/>
            <person name="Nelson W.C."/>
            <person name="Deboy R.T."/>
            <person name="Angiuoli S."/>
            <person name="Khouri H."/>
            <person name="Dimitrov G."/>
            <person name="Robinson J.R."/>
            <person name="Mulligan S."/>
            <person name="Walker R.L."/>
            <person name="Elzer P.E."/>
            <person name="Hassan K.A."/>
            <person name="Paulsen I.T."/>
        </authorList>
    </citation>
    <scope>NUCLEOTIDE SEQUENCE [LARGE SCALE GENOMIC DNA]</scope>
    <source>
        <strain>ATCC 25840 / 63/290 / NCTC 10512</strain>
    </source>
</reference>
<name>UBIG_BRUO2</name>